<proteinExistence type="inferred from homology"/>
<geneLocation type="chloroplast"/>
<name>PETN_BRADI</name>
<feature type="chain" id="PRO_0000355423" description="Cytochrome b6-f complex subunit 8">
    <location>
        <begin position="1"/>
        <end position="29"/>
    </location>
</feature>
<feature type="transmembrane region" description="Helical" evidence="1">
    <location>
        <begin position="3"/>
        <end position="23"/>
    </location>
</feature>
<dbReference type="EMBL" id="EU325680">
    <property type="protein sequence ID" value="ACF08630.1"/>
    <property type="molecule type" value="Genomic_DNA"/>
</dbReference>
<dbReference type="RefSeq" id="YP_002000477.1">
    <property type="nucleotide sequence ID" value="NC_011032.1"/>
</dbReference>
<dbReference type="SMR" id="B3TN41"/>
<dbReference type="FunCoup" id="B3TN41">
    <property type="interactions" value="72"/>
</dbReference>
<dbReference type="STRING" id="15368.B3TN41"/>
<dbReference type="EnsemblPlants" id="KQK09170">
    <property type="protein sequence ID" value="KQK09170"/>
    <property type="gene ID" value="BRADI_2g46432v3"/>
</dbReference>
<dbReference type="EnsemblPlants" id="PNT75851">
    <property type="protein sequence ID" value="PNT75851"/>
    <property type="gene ID" value="BRADI_1g39192v3"/>
</dbReference>
<dbReference type="GeneID" id="6439899"/>
<dbReference type="Gramene" id="KQK09170">
    <property type="protein sequence ID" value="KQK09170"/>
    <property type="gene ID" value="BRADI_2g46432v3"/>
</dbReference>
<dbReference type="Gramene" id="PNT75851">
    <property type="protein sequence ID" value="PNT75851"/>
    <property type="gene ID" value="BRADI_1g39192v3"/>
</dbReference>
<dbReference type="KEGG" id="bdi:6439899"/>
<dbReference type="InParanoid" id="B3TN41"/>
<dbReference type="Proteomes" id="UP000008810">
    <property type="component" value="Unplaced"/>
</dbReference>
<dbReference type="ExpressionAtlas" id="B3TN41">
    <property type="expression patterns" value="baseline"/>
</dbReference>
<dbReference type="GO" id="GO:0009535">
    <property type="term" value="C:chloroplast thylakoid membrane"/>
    <property type="evidence" value="ECO:0007669"/>
    <property type="project" value="UniProtKB-SubCell"/>
</dbReference>
<dbReference type="GO" id="GO:0009512">
    <property type="term" value="C:cytochrome b6f complex"/>
    <property type="evidence" value="ECO:0007669"/>
    <property type="project" value="InterPro"/>
</dbReference>
<dbReference type="GO" id="GO:0045158">
    <property type="term" value="F:electron transporter, transferring electrons within cytochrome b6/f complex of photosystem II activity"/>
    <property type="evidence" value="ECO:0007669"/>
    <property type="project" value="InterPro"/>
</dbReference>
<dbReference type="GO" id="GO:0017004">
    <property type="term" value="P:cytochrome complex assembly"/>
    <property type="evidence" value="ECO:0007669"/>
    <property type="project" value="UniProtKB-UniRule"/>
</dbReference>
<dbReference type="GO" id="GO:0015979">
    <property type="term" value="P:photosynthesis"/>
    <property type="evidence" value="ECO:0007669"/>
    <property type="project" value="UniProtKB-KW"/>
</dbReference>
<dbReference type="HAMAP" id="MF_00395">
    <property type="entry name" value="Cytb6_f_PetN"/>
    <property type="match status" value="1"/>
</dbReference>
<dbReference type="InterPro" id="IPR036143">
    <property type="entry name" value="Cytochr_b6-f_cplx_su8_sf"/>
</dbReference>
<dbReference type="InterPro" id="IPR005497">
    <property type="entry name" value="Cytochrome_b6-f_cplx_su8"/>
</dbReference>
<dbReference type="Pfam" id="PF03742">
    <property type="entry name" value="PetN"/>
    <property type="match status" value="1"/>
</dbReference>
<dbReference type="SUPFAM" id="SSF103451">
    <property type="entry name" value="PetN subunit of the cytochrome b6f complex"/>
    <property type="match status" value="1"/>
</dbReference>
<evidence type="ECO:0000255" key="1">
    <source>
        <dbReference type="HAMAP-Rule" id="MF_00395"/>
    </source>
</evidence>
<protein>
    <recommendedName>
        <fullName evidence="1">Cytochrome b6-f complex subunit 8</fullName>
    </recommendedName>
    <alternativeName>
        <fullName evidence="1">Cytochrome b6-f complex subunit PetN</fullName>
    </alternativeName>
    <alternativeName>
        <fullName evidence="1">Cytochrome b6-f complex subunit VIII</fullName>
    </alternativeName>
</protein>
<comment type="function">
    <text evidence="1">Component of the cytochrome b6-f complex, which mediates electron transfer between photosystem II (PSII) and photosystem I (PSI), cyclic electron flow around PSI, and state transitions.</text>
</comment>
<comment type="subunit">
    <text evidence="1">The 4 large subunits of the cytochrome b6-f complex are cytochrome b6, subunit IV (17 kDa polypeptide, PetD), cytochrome f and the Rieske protein, while the 4 small subunits are PetG, PetL, PetM and PetN. The complex functions as a dimer.</text>
</comment>
<comment type="subcellular location">
    <subcellularLocation>
        <location evidence="1">Plastid</location>
        <location evidence="1">Chloroplast thylakoid membrane</location>
        <topology evidence="1">Single-pass membrane protein</topology>
    </subcellularLocation>
</comment>
<comment type="similarity">
    <text evidence="1">Belongs to the PetN family.</text>
</comment>
<keyword id="KW-0150">Chloroplast</keyword>
<keyword id="KW-0249">Electron transport</keyword>
<keyword id="KW-0472">Membrane</keyword>
<keyword id="KW-0602">Photosynthesis</keyword>
<keyword id="KW-0934">Plastid</keyword>
<keyword id="KW-1185">Reference proteome</keyword>
<keyword id="KW-0793">Thylakoid</keyword>
<keyword id="KW-0812">Transmembrane</keyword>
<keyword id="KW-1133">Transmembrane helix</keyword>
<keyword id="KW-0813">Transport</keyword>
<reference key="1">
    <citation type="journal article" date="2008" name="BMC Res. Notes">
        <title>The complete chloroplast genome sequence of Brachypodium distachyon: sequence comparison and phylogenetic analysis of eight grass plastomes.</title>
        <authorList>
            <person name="Bortiri E."/>
            <person name="Coleman-Derr D."/>
            <person name="Lazo G.R."/>
            <person name="Anderson O.D."/>
            <person name="Gu Y.Q."/>
        </authorList>
    </citation>
    <scope>NUCLEOTIDE SEQUENCE [LARGE SCALE GENOMIC DNA]</scope>
    <source>
        <strain>cv. Bd21</strain>
    </source>
</reference>
<accession>B3TN41</accession>
<gene>
    <name evidence="1" type="primary">petN</name>
</gene>
<sequence length="29" mass="3170">MDIVSLAWAALMVVFTFSLSLVVWGRSGL</sequence>
<organism>
    <name type="scientific">Brachypodium distachyon</name>
    <name type="common">Purple false brome</name>
    <name type="synonym">Trachynia distachya</name>
    <dbReference type="NCBI Taxonomy" id="15368"/>
    <lineage>
        <taxon>Eukaryota</taxon>
        <taxon>Viridiplantae</taxon>
        <taxon>Streptophyta</taxon>
        <taxon>Embryophyta</taxon>
        <taxon>Tracheophyta</taxon>
        <taxon>Spermatophyta</taxon>
        <taxon>Magnoliopsida</taxon>
        <taxon>Liliopsida</taxon>
        <taxon>Poales</taxon>
        <taxon>Poaceae</taxon>
        <taxon>BOP clade</taxon>
        <taxon>Pooideae</taxon>
        <taxon>Stipodae</taxon>
        <taxon>Brachypodieae</taxon>
        <taxon>Brachypodium</taxon>
    </lineage>
</organism>